<sequence length="174" mass="17611">MTDIADVIRSLMREVPDFPEPGVHFKDLTPVLADARGLAEVSKAIADAARGADLVAGVDARGFLLGGAVAVTLGIGVLAVRKGGKLPPPVIGATYTLEYGTATLEVPAEGIELAGRSVVVIDDVLATGGTLAATHQLLTRAGANVTGAVVMMELAALGGRAALEPLEVTSLYTA</sequence>
<name>APT_MYCVP</name>
<gene>
    <name evidence="1" type="primary">apt</name>
    <name type="ordered locus">Mvan_2586</name>
</gene>
<comment type="function">
    <text evidence="1">Catalyzes a salvage reaction resulting in the formation of AMP, that is energically less costly than de novo synthesis.</text>
</comment>
<comment type="catalytic activity">
    <reaction evidence="1">
        <text>AMP + diphosphate = 5-phospho-alpha-D-ribose 1-diphosphate + adenine</text>
        <dbReference type="Rhea" id="RHEA:16609"/>
        <dbReference type="ChEBI" id="CHEBI:16708"/>
        <dbReference type="ChEBI" id="CHEBI:33019"/>
        <dbReference type="ChEBI" id="CHEBI:58017"/>
        <dbReference type="ChEBI" id="CHEBI:456215"/>
        <dbReference type="EC" id="2.4.2.7"/>
    </reaction>
</comment>
<comment type="pathway">
    <text evidence="1">Purine metabolism; AMP biosynthesis via salvage pathway; AMP from adenine: step 1/1.</text>
</comment>
<comment type="subunit">
    <text evidence="1">Homodimer.</text>
</comment>
<comment type="subcellular location">
    <subcellularLocation>
        <location evidence="1">Cytoplasm</location>
    </subcellularLocation>
</comment>
<comment type="similarity">
    <text evidence="1">Belongs to the purine/pyrimidine phosphoribosyltransferase family.</text>
</comment>
<dbReference type="EC" id="2.4.2.7" evidence="1"/>
<dbReference type="EMBL" id="CP000511">
    <property type="protein sequence ID" value="ABM13394.1"/>
    <property type="molecule type" value="Genomic_DNA"/>
</dbReference>
<dbReference type="SMR" id="A1T894"/>
<dbReference type="STRING" id="350058.Mvan_2586"/>
<dbReference type="KEGG" id="mva:Mvan_2586"/>
<dbReference type="eggNOG" id="COG0503">
    <property type="taxonomic scope" value="Bacteria"/>
</dbReference>
<dbReference type="HOGENOM" id="CLU_063339_3_3_11"/>
<dbReference type="UniPathway" id="UPA00588">
    <property type="reaction ID" value="UER00646"/>
</dbReference>
<dbReference type="Proteomes" id="UP000009159">
    <property type="component" value="Chromosome"/>
</dbReference>
<dbReference type="GO" id="GO:0005737">
    <property type="term" value="C:cytoplasm"/>
    <property type="evidence" value="ECO:0007669"/>
    <property type="project" value="UniProtKB-SubCell"/>
</dbReference>
<dbReference type="GO" id="GO:0002055">
    <property type="term" value="F:adenine binding"/>
    <property type="evidence" value="ECO:0007669"/>
    <property type="project" value="TreeGrafter"/>
</dbReference>
<dbReference type="GO" id="GO:0003999">
    <property type="term" value="F:adenine phosphoribosyltransferase activity"/>
    <property type="evidence" value="ECO:0007669"/>
    <property type="project" value="UniProtKB-UniRule"/>
</dbReference>
<dbReference type="GO" id="GO:0016208">
    <property type="term" value="F:AMP binding"/>
    <property type="evidence" value="ECO:0007669"/>
    <property type="project" value="TreeGrafter"/>
</dbReference>
<dbReference type="GO" id="GO:0006168">
    <property type="term" value="P:adenine salvage"/>
    <property type="evidence" value="ECO:0007669"/>
    <property type="project" value="InterPro"/>
</dbReference>
<dbReference type="GO" id="GO:0044209">
    <property type="term" value="P:AMP salvage"/>
    <property type="evidence" value="ECO:0007669"/>
    <property type="project" value="UniProtKB-UniRule"/>
</dbReference>
<dbReference type="GO" id="GO:0006166">
    <property type="term" value="P:purine ribonucleoside salvage"/>
    <property type="evidence" value="ECO:0007669"/>
    <property type="project" value="UniProtKB-KW"/>
</dbReference>
<dbReference type="CDD" id="cd06223">
    <property type="entry name" value="PRTases_typeI"/>
    <property type="match status" value="1"/>
</dbReference>
<dbReference type="FunFam" id="3.40.50.2020:FF:000021">
    <property type="entry name" value="Adenine phosphoribosyltransferase"/>
    <property type="match status" value="1"/>
</dbReference>
<dbReference type="Gene3D" id="3.40.50.2020">
    <property type="match status" value="1"/>
</dbReference>
<dbReference type="HAMAP" id="MF_00004">
    <property type="entry name" value="Aden_phosphoribosyltr"/>
    <property type="match status" value="1"/>
</dbReference>
<dbReference type="InterPro" id="IPR005764">
    <property type="entry name" value="Ade_phspho_trans"/>
</dbReference>
<dbReference type="InterPro" id="IPR000836">
    <property type="entry name" value="PRibTrfase_dom"/>
</dbReference>
<dbReference type="InterPro" id="IPR029057">
    <property type="entry name" value="PRTase-like"/>
</dbReference>
<dbReference type="InterPro" id="IPR050054">
    <property type="entry name" value="UPRTase/APRTase"/>
</dbReference>
<dbReference type="NCBIfam" id="NF002636">
    <property type="entry name" value="PRK02304.1-5"/>
    <property type="match status" value="1"/>
</dbReference>
<dbReference type="PANTHER" id="PTHR32315">
    <property type="entry name" value="ADENINE PHOSPHORIBOSYLTRANSFERASE"/>
    <property type="match status" value="1"/>
</dbReference>
<dbReference type="PANTHER" id="PTHR32315:SF3">
    <property type="entry name" value="ADENINE PHOSPHORIBOSYLTRANSFERASE"/>
    <property type="match status" value="1"/>
</dbReference>
<dbReference type="Pfam" id="PF00156">
    <property type="entry name" value="Pribosyltran"/>
    <property type="match status" value="1"/>
</dbReference>
<dbReference type="SUPFAM" id="SSF53271">
    <property type="entry name" value="PRTase-like"/>
    <property type="match status" value="1"/>
</dbReference>
<dbReference type="PROSITE" id="PS00103">
    <property type="entry name" value="PUR_PYR_PR_TRANSFER"/>
    <property type="match status" value="1"/>
</dbReference>
<keyword id="KW-0963">Cytoplasm</keyword>
<keyword id="KW-0328">Glycosyltransferase</keyword>
<keyword id="KW-0660">Purine salvage</keyword>
<keyword id="KW-0808">Transferase</keyword>
<proteinExistence type="inferred from homology"/>
<evidence type="ECO:0000255" key="1">
    <source>
        <dbReference type="HAMAP-Rule" id="MF_00004"/>
    </source>
</evidence>
<protein>
    <recommendedName>
        <fullName evidence="1">Adenine phosphoribosyltransferase</fullName>
        <shortName evidence="1">APRT</shortName>
        <ecNumber evidence="1">2.4.2.7</ecNumber>
    </recommendedName>
</protein>
<feature type="chain" id="PRO_0000321371" description="Adenine phosphoribosyltransferase">
    <location>
        <begin position="1"/>
        <end position="174"/>
    </location>
</feature>
<reference key="1">
    <citation type="submission" date="2006-12" db="EMBL/GenBank/DDBJ databases">
        <title>Complete sequence of Mycobacterium vanbaalenii PYR-1.</title>
        <authorList>
            <consortium name="US DOE Joint Genome Institute"/>
            <person name="Copeland A."/>
            <person name="Lucas S."/>
            <person name="Lapidus A."/>
            <person name="Barry K."/>
            <person name="Detter J.C."/>
            <person name="Glavina del Rio T."/>
            <person name="Hammon N."/>
            <person name="Israni S."/>
            <person name="Dalin E."/>
            <person name="Tice H."/>
            <person name="Pitluck S."/>
            <person name="Singan V."/>
            <person name="Schmutz J."/>
            <person name="Larimer F."/>
            <person name="Land M."/>
            <person name="Hauser L."/>
            <person name="Kyrpides N."/>
            <person name="Anderson I.J."/>
            <person name="Miller C."/>
            <person name="Richardson P."/>
        </authorList>
    </citation>
    <scope>NUCLEOTIDE SEQUENCE [LARGE SCALE GENOMIC DNA]</scope>
    <source>
        <strain>DSM 7251 / JCM 13017 / BCRC 16820 / KCTC 9966 / NRRL B-24157 / PYR-1</strain>
    </source>
</reference>
<organism>
    <name type="scientific">Mycolicibacterium vanbaalenii (strain DSM 7251 / JCM 13017 / BCRC 16820 / KCTC 9966 / NRRL B-24157 / PYR-1)</name>
    <name type="common">Mycobacterium vanbaalenii</name>
    <dbReference type="NCBI Taxonomy" id="350058"/>
    <lineage>
        <taxon>Bacteria</taxon>
        <taxon>Bacillati</taxon>
        <taxon>Actinomycetota</taxon>
        <taxon>Actinomycetes</taxon>
        <taxon>Mycobacteriales</taxon>
        <taxon>Mycobacteriaceae</taxon>
        <taxon>Mycolicibacterium</taxon>
    </lineage>
</organism>
<accession>A1T894</accession>